<proteinExistence type="inferred from homology"/>
<gene>
    <name evidence="1" type="primary">rpmG</name>
    <name type="ordered locus">Bcen_1892</name>
</gene>
<protein>
    <recommendedName>
        <fullName evidence="1">Large ribosomal subunit protein bL33</fullName>
    </recommendedName>
    <alternativeName>
        <fullName evidence="2">50S ribosomal protein L33</fullName>
    </alternativeName>
</protein>
<reference key="1">
    <citation type="submission" date="2006-05" db="EMBL/GenBank/DDBJ databases">
        <title>Complete sequence of chromosome 1 of Burkholderia cenocepacia AU 1054.</title>
        <authorList>
            <consortium name="US DOE Joint Genome Institute"/>
            <person name="Copeland A."/>
            <person name="Lucas S."/>
            <person name="Lapidus A."/>
            <person name="Barry K."/>
            <person name="Detter J.C."/>
            <person name="Glavina del Rio T."/>
            <person name="Hammon N."/>
            <person name="Israni S."/>
            <person name="Dalin E."/>
            <person name="Tice H."/>
            <person name="Pitluck S."/>
            <person name="Chain P."/>
            <person name="Malfatti S."/>
            <person name="Shin M."/>
            <person name="Vergez L."/>
            <person name="Schmutz J."/>
            <person name="Larimer F."/>
            <person name="Land M."/>
            <person name="Hauser L."/>
            <person name="Kyrpides N."/>
            <person name="Lykidis A."/>
            <person name="LiPuma J.J."/>
            <person name="Konstantinidis K."/>
            <person name="Tiedje J.M."/>
            <person name="Richardson P."/>
        </authorList>
    </citation>
    <scope>NUCLEOTIDE SEQUENCE [LARGE SCALE GENOMIC DNA]</scope>
    <source>
        <strain>AU 1054</strain>
    </source>
</reference>
<keyword id="KW-0687">Ribonucleoprotein</keyword>
<keyword id="KW-0689">Ribosomal protein</keyword>
<accession>Q1BUB0</accession>
<feature type="chain" id="PRO_1000115102" description="Large ribosomal subunit protein bL33">
    <location>
        <begin position="1"/>
        <end position="55"/>
    </location>
</feature>
<evidence type="ECO:0000255" key="1">
    <source>
        <dbReference type="HAMAP-Rule" id="MF_00294"/>
    </source>
</evidence>
<evidence type="ECO:0000305" key="2"/>
<organism>
    <name type="scientific">Burkholderia orbicola (strain AU 1054)</name>
    <dbReference type="NCBI Taxonomy" id="331271"/>
    <lineage>
        <taxon>Bacteria</taxon>
        <taxon>Pseudomonadati</taxon>
        <taxon>Pseudomonadota</taxon>
        <taxon>Betaproteobacteria</taxon>
        <taxon>Burkholderiales</taxon>
        <taxon>Burkholderiaceae</taxon>
        <taxon>Burkholderia</taxon>
        <taxon>Burkholderia cepacia complex</taxon>
        <taxon>Burkholderia orbicola</taxon>
    </lineage>
</organism>
<comment type="similarity">
    <text evidence="1">Belongs to the bacterial ribosomal protein bL33 family.</text>
</comment>
<dbReference type="EMBL" id="CP000378">
    <property type="protein sequence ID" value="ABF76795.1"/>
    <property type="molecule type" value="Genomic_DNA"/>
</dbReference>
<dbReference type="SMR" id="Q1BUB0"/>
<dbReference type="HOGENOM" id="CLU_190949_1_1_4"/>
<dbReference type="GO" id="GO:0022625">
    <property type="term" value="C:cytosolic large ribosomal subunit"/>
    <property type="evidence" value="ECO:0007669"/>
    <property type="project" value="TreeGrafter"/>
</dbReference>
<dbReference type="GO" id="GO:0003735">
    <property type="term" value="F:structural constituent of ribosome"/>
    <property type="evidence" value="ECO:0007669"/>
    <property type="project" value="InterPro"/>
</dbReference>
<dbReference type="GO" id="GO:0006412">
    <property type="term" value="P:translation"/>
    <property type="evidence" value="ECO:0007669"/>
    <property type="project" value="UniProtKB-UniRule"/>
</dbReference>
<dbReference type="FunFam" id="2.20.28.120:FF:000001">
    <property type="entry name" value="50S ribosomal protein L33"/>
    <property type="match status" value="1"/>
</dbReference>
<dbReference type="Gene3D" id="2.20.28.120">
    <property type="entry name" value="Ribosomal protein L33"/>
    <property type="match status" value="1"/>
</dbReference>
<dbReference type="HAMAP" id="MF_00294">
    <property type="entry name" value="Ribosomal_bL33"/>
    <property type="match status" value="1"/>
</dbReference>
<dbReference type="InterPro" id="IPR001705">
    <property type="entry name" value="Ribosomal_bL33"/>
</dbReference>
<dbReference type="InterPro" id="IPR018264">
    <property type="entry name" value="Ribosomal_bL33_CS"/>
</dbReference>
<dbReference type="InterPro" id="IPR038584">
    <property type="entry name" value="Ribosomal_bL33_sf"/>
</dbReference>
<dbReference type="InterPro" id="IPR011332">
    <property type="entry name" value="Ribosomal_zn-bd"/>
</dbReference>
<dbReference type="NCBIfam" id="NF001860">
    <property type="entry name" value="PRK00595.1"/>
    <property type="match status" value="1"/>
</dbReference>
<dbReference type="NCBIfam" id="TIGR01023">
    <property type="entry name" value="rpmG_bact"/>
    <property type="match status" value="1"/>
</dbReference>
<dbReference type="PANTHER" id="PTHR15238">
    <property type="entry name" value="54S RIBOSOMAL PROTEIN L39, MITOCHONDRIAL"/>
    <property type="match status" value="1"/>
</dbReference>
<dbReference type="PANTHER" id="PTHR15238:SF1">
    <property type="entry name" value="LARGE RIBOSOMAL SUBUNIT PROTEIN BL33M"/>
    <property type="match status" value="1"/>
</dbReference>
<dbReference type="Pfam" id="PF00471">
    <property type="entry name" value="Ribosomal_L33"/>
    <property type="match status" value="1"/>
</dbReference>
<dbReference type="SUPFAM" id="SSF57829">
    <property type="entry name" value="Zn-binding ribosomal proteins"/>
    <property type="match status" value="1"/>
</dbReference>
<dbReference type="PROSITE" id="PS00582">
    <property type="entry name" value="RIBOSOMAL_L33"/>
    <property type="match status" value="1"/>
</dbReference>
<name>RL33_BURO1</name>
<sequence>MAKGARDKIKLESTAGTGHFYTTTKNKRNMPEKMAIKKFDPVVRKHVEYKETKIK</sequence>